<feature type="chain" id="PRO_1000126255" description="Transaldolase">
    <location>
        <begin position="1"/>
        <end position="321"/>
    </location>
</feature>
<feature type="active site" description="Schiff-base intermediate with substrate" evidence="2">
    <location>
        <position position="132"/>
    </location>
</feature>
<gene>
    <name evidence="2" type="primary">tal</name>
    <name type="ordered locus">Rleg2_3437</name>
</gene>
<name>TAL_RHILW</name>
<proteinExistence type="inferred from homology"/>
<dbReference type="EC" id="2.2.1.2" evidence="2"/>
<dbReference type="EMBL" id="CP001191">
    <property type="protein sequence ID" value="ACI56704.1"/>
    <property type="molecule type" value="Genomic_DNA"/>
</dbReference>
<dbReference type="RefSeq" id="WP_003590158.1">
    <property type="nucleotide sequence ID" value="NC_011369.1"/>
</dbReference>
<dbReference type="SMR" id="B5ZQY2"/>
<dbReference type="STRING" id="395492.Rleg2_3437"/>
<dbReference type="KEGG" id="rlt:Rleg2_3437"/>
<dbReference type="eggNOG" id="COG0176">
    <property type="taxonomic scope" value="Bacteria"/>
</dbReference>
<dbReference type="HOGENOM" id="CLU_047470_0_1_5"/>
<dbReference type="UniPathway" id="UPA00115">
    <property type="reaction ID" value="UER00414"/>
</dbReference>
<dbReference type="Proteomes" id="UP000008330">
    <property type="component" value="Chromosome"/>
</dbReference>
<dbReference type="GO" id="GO:0005829">
    <property type="term" value="C:cytosol"/>
    <property type="evidence" value="ECO:0007669"/>
    <property type="project" value="TreeGrafter"/>
</dbReference>
<dbReference type="GO" id="GO:0004801">
    <property type="term" value="F:transaldolase activity"/>
    <property type="evidence" value="ECO:0000250"/>
    <property type="project" value="UniProtKB"/>
</dbReference>
<dbReference type="GO" id="GO:0005975">
    <property type="term" value="P:carbohydrate metabolic process"/>
    <property type="evidence" value="ECO:0007669"/>
    <property type="project" value="InterPro"/>
</dbReference>
<dbReference type="GO" id="GO:0006098">
    <property type="term" value="P:pentose-phosphate shunt"/>
    <property type="evidence" value="ECO:0007669"/>
    <property type="project" value="UniProtKB-UniRule"/>
</dbReference>
<dbReference type="CDD" id="cd00957">
    <property type="entry name" value="Transaldolase_TalAB"/>
    <property type="match status" value="1"/>
</dbReference>
<dbReference type="FunFam" id="3.20.20.70:FF:000131">
    <property type="entry name" value="Transaldolase"/>
    <property type="match status" value="1"/>
</dbReference>
<dbReference type="Gene3D" id="3.20.20.70">
    <property type="entry name" value="Aldolase class I"/>
    <property type="match status" value="1"/>
</dbReference>
<dbReference type="HAMAP" id="MF_00492">
    <property type="entry name" value="Transaldolase_1"/>
    <property type="match status" value="1"/>
</dbReference>
<dbReference type="InterPro" id="IPR013785">
    <property type="entry name" value="Aldolase_TIM"/>
</dbReference>
<dbReference type="InterPro" id="IPR001585">
    <property type="entry name" value="TAL/FSA"/>
</dbReference>
<dbReference type="InterPro" id="IPR004730">
    <property type="entry name" value="Transaldolase_1"/>
</dbReference>
<dbReference type="InterPro" id="IPR018225">
    <property type="entry name" value="Transaldolase_AS"/>
</dbReference>
<dbReference type="NCBIfam" id="NF009001">
    <property type="entry name" value="PRK12346.1"/>
    <property type="match status" value="1"/>
</dbReference>
<dbReference type="NCBIfam" id="TIGR00874">
    <property type="entry name" value="talAB"/>
    <property type="match status" value="1"/>
</dbReference>
<dbReference type="PANTHER" id="PTHR10683">
    <property type="entry name" value="TRANSALDOLASE"/>
    <property type="match status" value="1"/>
</dbReference>
<dbReference type="PANTHER" id="PTHR10683:SF18">
    <property type="entry name" value="TRANSALDOLASE"/>
    <property type="match status" value="1"/>
</dbReference>
<dbReference type="Pfam" id="PF00923">
    <property type="entry name" value="TAL_FSA"/>
    <property type="match status" value="1"/>
</dbReference>
<dbReference type="SUPFAM" id="SSF51569">
    <property type="entry name" value="Aldolase"/>
    <property type="match status" value="1"/>
</dbReference>
<dbReference type="PROSITE" id="PS01054">
    <property type="entry name" value="TRANSALDOLASE_1"/>
    <property type="match status" value="1"/>
</dbReference>
<dbReference type="PROSITE" id="PS00958">
    <property type="entry name" value="TRANSALDOLASE_2"/>
    <property type="match status" value="1"/>
</dbReference>
<organism>
    <name type="scientific">Rhizobium leguminosarum bv. trifolii (strain WSM2304)</name>
    <dbReference type="NCBI Taxonomy" id="395492"/>
    <lineage>
        <taxon>Bacteria</taxon>
        <taxon>Pseudomonadati</taxon>
        <taxon>Pseudomonadota</taxon>
        <taxon>Alphaproteobacteria</taxon>
        <taxon>Hyphomicrobiales</taxon>
        <taxon>Rhizobiaceae</taxon>
        <taxon>Rhizobium/Agrobacterium group</taxon>
        <taxon>Rhizobium</taxon>
    </lineage>
</organism>
<reference key="1">
    <citation type="journal article" date="2010" name="Stand. Genomic Sci.">
        <title>Complete genome sequence of Rhizobium leguminosarum bv trifolii strain WSM2304, an effective microsymbiont of the South American clover Trifolium polymorphum.</title>
        <authorList>
            <person name="Reeve W."/>
            <person name="O'Hara G."/>
            <person name="Chain P."/>
            <person name="Ardley J."/>
            <person name="Brau L."/>
            <person name="Nandesena K."/>
            <person name="Tiwari R."/>
            <person name="Malfatti S."/>
            <person name="Kiss H."/>
            <person name="Lapidus A."/>
            <person name="Copeland A."/>
            <person name="Nolan M."/>
            <person name="Land M."/>
            <person name="Ivanova N."/>
            <person name="Mavromatis K."/>
            <person name="Markowitz V."/>
            <person name="Kyrpides N."/>
            <person name="Melino V."/>
            <person name="Denton M."/>
            <person name="Yates R."/>
            <person name="Howieson J."/>
        </authorList>
    </citation>
    <scope>NUCLEOTIDE SEQUENCE [LARGE SCALE GENOMIC DNA]</scope>
    <source>
        <strain>WSM2304</strain>
    </source>
</reference>
<evidence type="ECO:0000250" key="1"/>
<evidence type="ECO:0000255" key="2">
    <source>
        <dbReference type="HAMAP-Rule" id="MF_00492"/>
    </source>
</evidence>
<sequence length="321" mass="34801">MTSKLDQLREITTVVADTGDIEAVARLKPVDCTTNPSIVLKALGTPMFADAIKEAVAWGKKQGGNPDAVSSAVADRLAISVGAALVKLVPGRVSTEVDADLSFDTEASLAKARSIIAAYKDRGIDQDRILIKLASTWEGIRAAEVLQKEGIDCNLTLLFSKAQAIACADAKVFLISPFVGRILDWYKKSTGKDYTAEEDPGVISVREIYNYYKANDIKTIVMGASFRSAGEIEALAGCDRLTISPNLLDELAKDEGKLERKLSPEGRKPDPKVSVDEKTFRWMMNEDAMATEKLAEGIRAFAKDLGTLRTMVQKELQLAAA</sequence>
<keyword id="KW-0963">Cytoplasm</keyword>
<keyword id="KW-0570">Pentose shunt</keyword>
<keyword id="KW-1185">Reference proteome</keyword>
<keyword id="KW-0704">Schiff base</keyword>
<keyword id="KW-0808">Transferase</keyword>
<protein>
    <recommendedName>
        <fullName evidence="2">Transaldolase</fullName>
        <ecNumber evidence="2">2.2.1.2</ecNumber>
    </recommendedName>
</protein>
<accession>B5ZQY2</accession>
<comment type="function">
    <text evidence="2">Transaldolase is important for the balance of metabolites in the pentose-phosphate pathway.</text>
</comment>
<comment type="catalytic activity">
    <reaction evidence="2">
        <text>D-sedoheptulose 7-phosphate + D-glyceraldehyde 3-phosphate = D-erythrose 4-phosphate + beta-D-fructose 6-phosphate</text>
        <dbReference type="Rhea" id="RHEA:17053"/>
        <dbReference type="ChEBI" id="CHEBI:16897"/>
        <dbReference type="ChEBI" id="CHEBI:57483"/>
        <dbReference type="ChEBI" id="CHEBI:57634"/>
        <dbReference type="ChEBI" id="CHEBI:59776"/>
        <dbReference type="EC" id="2.2.1.2"/>
    </reaction>
</comment>
<comment type="pathway">
    <text evidence="2">Carbohydrate degradation; pentose phosphate pathway; D-glyceraldehyde 3-phosphate and beta-D-fructose 6-phosphate from D-ribose 5-phosphate and D-xylulose 5-phosphate (non-oxidative stage): step 2/3.</text>
</comment>
<comment type="subunit">
    <text evidence="1">Homodimer.</text>
</comment>
<comment type="subcellular location">
    <subcellularLocation>
        <location evidence="2">Cytoplasm</location>
    </subcellularLocation>
</comment>
<comment type="similarity">
    <text evidence="2">Belongs to the transaldolase family. Type 1 subfamily.</text>
</comment>